<keyword id="KW-0238">DNA-binding</keyword>
<keyword id="KW-0939">Gibberellin signaling pathway</keyword>
<keyword id="KW-0479">Metal-binding</keyword>
<keyword id="KW-0539">Nucleus</keyword>
<keyword id="KW-0597">Phosphoprotein</keyword>
<keyword id="KW-1185">Reference proteome</keyword>
<keyword id="KW-0677">Repeat</keyword>
<keyword id="KW-0804">Transcription</keyword>
<keyword id="KW-0805">Transcription regulation</keyword>
<keyword id="KW-0862">Zinc</keyword>
<keyword id="KW-0863">Zinc-finger</keyword>
<sequence length="500" mass="52626">MPVDLDNSSTVSGDASVSSTGNQNLTPKSVGKKKRNLPGMPDPDAEVIALSPKTLMATNRFVCEICNKGFQRDQNLQLHRRGHNLPWKLRQRSTKEVRKKVYVCPVSGCVHHDPSRALGDLTGIKKHFCRKHGEKKWKCEKCSKKYAVQSDWKAHSKICGTKEYKCDCGTLFSRRDSFITHRAFCDALAEESAKNHTQSKKLYPETVTRKNPEIEQKSPAAVESSPSLPPSSPPSVAIAPAPAISVETESVKIISSSVLPIQNSPESQENNNHPEVIIEEASRTIGFNVSSSDLSNDHSNNNGGYAGLFVSSTASPSLYASSTASPSLFAPSSSMEPISLCLSTNPSLFGPTIRDPPHFLTPLPPQPAMSATALLQKAAQMGSTGSGGSLLRGLGIVSTTSSSMELSNHDALSLAPGLGLGLPCSSGGSGSGLKELMMGNSSVFGPKQTTLDFLGLGRAVGNGGNTGGGLSALLTSIGGGGGIDLFGSGEFSGKDIGRSS</sequence>
<dbReference type="EMBL" id="AB018119">
    <property type="protein sequence ID" value="BAA97279.1"/>
    <property type="molecule type" value="Genomic_DNA"/>
</dbReference>
<dbReference type="EMBL" id="CP002688">
    <property type="protein sequence ID" value="AED98257.1"/>
    <property type="molecule type" value="Genomic_DNA"/>
</dbReference>
<dbReference type="EMBL" id="AY099859">
    <property type="protein sequence ID" value="AAM20710.1"/>
    <property type="molecule type" value="mRNA"/>
</dbReference>
<dbReference type="EMBL" id="BT000310">
    <property type="protein sequence ID" value="AAN15629.1"/>
    <property type="molecule type" value="mRNA"/>
</dbReference>
<dbReference type="RefSeq" id="NP_201474.1">
    <property type="nucleotide sequence ID" value="NM_126071.5"/>
</dbReference>
<dbReference type="FunCoup" id="Q9LVQ7">
    <property type="interactions" value="1981"/>
</dbReference>
<dbReference type="IntAct" id="Q9LVQ7">
    <property type="interactions" value="29"/>
</dbReference>
<dbReference type="STRING" id="3702.Q9LVQ7"/>
<dbReference type="GlyGen" id="Q9LVQ7">
    <property type="glycosylation" value="2 sites, 1 O-linked glycan (2 sites)"/>
</dbReference>
<dbReference type="iPTMnet" id="Q9LVQ7"/>
<dbReference type="PaxDb" id="3702-AT5G66730.1"/>
<dbReference type="ProteomicsDB" id="228782"/>
<dbReference type="EnsemblPlants" id="AT5G66730.1">
    <property type="protein sequence ID" value="AT5G66730.1"/>
    <property type="gene ID" value="AT5G66730"/>
</dbReference>
<dbReference type="GeneID" id="836806"/>
<dbReference type="Gramene" id="AT5G66730.1">
    <property type="protein sequence ID" value="AT5G66730.1"/>
    <property type="gene ID" value="AT5G66730"/>
</dbReference>
<dbReference type="KEGG" id="ath:AT5G66730"/>
<dbReference type="Araport" id="AT5G66730"/>
<dbReference type="TAIR" id="AT5G66730">
    <property type="gene designation" value="IDD1"/>
</dbReference>
<dbReference type="eggNOG" id="KOG1721">
    <property type="taxonomic scope" value="Eukaryota"/>
</dbReference>
<dbReference type="HOGENOM" id="CLU_014578_2_2_1"/>
<dbReference type="InParanoid" id="Q9LVQ7"/>
<dbReference type="OMA" id="MPITQNP"/>
<dbReference type="OrthoDB" id="6354171at2759"/>
<dbReference type="PhylomeDB" id="Q9LVQ7"/>
<dbReference type="PRO" id="PR:Q9LVQ7"/>
<dbReference type="Proteomes" id="UP000006548">
    <property type="component" value="Chromosome 5"/>
</dbReference>
<dbReference type="ExpressionAtlas" id="Q9LVQ7">
    <property type="expression patterns" value="baseline and differential"/>
</dbReference>
<dbReference type="GO" id="GO:0005634">
    <property type="term" value="C:nucleus"/>
    <property type="evidence" value="ECO:0000314"/>
    <property type="project" value="TAIR"/>
</dbReference>
<dbReference type="GO" id="GO:0003700">
    <property type="term" value="F:DNA-binding transcription factor activity"/>
    <property type="evidence" value="ECO:0000250"/>
    <property type="project" value="TAIR"/>
</dbReference>
<dbReference type="GO" id="GO:0000976">
    <property type="term" value="F:transcription cis-regulatory region binding"/>
    <property type="evidence" value="ECO:0000353"/>
    <property type="project" value="TAIR"/>
</dbReference>
<dbReference type="GO" id="GO:0008270">
    <property type="term" value="F:zinc ion binding"/>
    <property type="evidence" value="ECO:0007669"/>
    <property type="project" value="UniProtKB-KW"/>
</dbReference>
<dbReference type="GO" id="GO:0009740">
    <property type="term" value="P:gibberellic acid mediated signaling pathway"/>
    <property type="evidence" value="ECO:0007669"/>
    <property type="project" value="UniProtKB-KW"/>
</dbReference>
<dbReference type="GO" id="GO:0006355">
    <property type="term" value="P:regulation of DNA-templated transcription"/>
    <property type="evidence" value="ECO:0000304"/>
    <property type="project" value="TAIR"/>
</dbReference>
<dbReference type="GO" id="GO:0009937">
    <property type="term" value="P:regulation of gibberellic acid mediated signaling pathway"/>
    <property type="evidence" value="ECO:0000315"/>
    <property type="project" value="UniProtKB"/>
</dbReference>
<dbReference type="GO" id="GO:0010029">
    <property type="term" value="P:regulation of seed germination"/>
    <property type="evidence" value="ECO:0000315"/>
    <property type="project" value="TAIR"/>
</dbReference>
<dbReference type="GO" id="GO:0010431">
    <property type="term" value="P:seed maturation"/>
    <property type="evidence" value="ECO:0000315"/>
    <property type="project" value="TAIR"/>
</dbReference>
<dbReference type="FunFam" id="3.30.160.60:FF:000554">
    <property type="entry name" value="protein indeterminate-domain 12-like"/>
    <property type="match status" value="1"/>
</dbReference>
<dbReference type="FunFam" id="3.30.160.60:FF:000131">
    <property type="entry name" value="protein indeterminate-domain 5, chloroplastic-like"/>
    <property type="match status" value="1"/>
</dbReference>
<dbReference type="Gene3D" id="3.30.160.60">
    <property type="entry name" value="Classic Zinc Finger"/>
    <property type="match status" value="2"/>
</dbReference>
<dbReference type="InterPro" id="IPR055187">
    <property type="entry name" value="C2CH-3rd_BIRD-IDD"/>
</dbReference>
<dbReference type="InterPro" id="IPR055185">
    <property type="entry name" value="C2CH-4th_BIRD-IDD"/>
</dbReference>
<dbReference type="InterPro" id="IPR055186">
    <property type="entry name" value="C2H2-2nd_BIRD-IDD"/>
</dbReference>
<dbReference type="InterPro" id="IPR031140">
    <property type="entry name" value="IDD1-16"/>
</dbReference>
<dbReference type="InterPro" id="IPR036236">
    <property type="entry name" value="Znf_C2H2_sf"/>
</dbReference>
<dbReference type="InterPro" id="IPR013087">
    <property type="entry name" value="Znf_C2H2_type"/>
</dbReference>
<dbReference type="PANTHER" id="PTHR10593">
    <property type="entry name" value="SERINE/THREONINE-PROTEIN KINASE RIO"/>
    <property type="match status" value="1"/>
</dbReference>
<dbReference type="PANTHER" id="PTHR10593:SF248">
    <property type="entry name" value="ZINC FINGER PROTEIN ENHYDROUS"/>
    <property type="match status" value="1"/>
</dbReference>
<dbReference type="Pfam" id="PF22995">
    <property type="entry name" value="C2CH-3rd_BIRD-IDD"/>
    <property type="match status" value="1"/>
</dbReference>
<dbReference type="Pfam" id="PF22992">
    <property type="entry name" value="C2CH-4th_BIRD-IDD"/>
    <property type="match status" value="1"/>
</dbReference>
<dbReference type="Pfam" id="PF22996">
    <property type="entry name" value="C2H2-2nd_BIRD-IDD"/>
    <property type="match status" value="1"/>
</dbReference>
<dbReference type="Pfam" id="PF00096">
    <property type="entry name" value="zf-C2H2"/>
    <property type="match status" value="1"/>
</dbReference>
<dbReference type="SMART" id="SM00355">
    <property type="entry name" value="ZnF_C2H2"/>
    <property type="match status" value="3"/>
</dbReference>
<dbReference type="SUPFAM" id="SSF57667">
    <property type="entry name" value="beta-beta-alpha zinc fingers"/>
    <property type="match status" value="1"/>
</dbReference>
<dbReference type="PROSITE" id="PS00028">
    <property type="entry name" value="ZINC_FINGER_C2H2_1"/>
    <property type="match status" value="1"/>
</dbReference>
<dbReference type="PROSITE" id="PS50157">
    <property type="entry name" value="ZINC_FINGER_C2H2_2"/>
    <property type="match status" value="1"/>
</dbReference>
<protein>
    <recommendedName>
        <fullName evidence="9">Zinc finger protein ENHYDROUS</fullName>
    </recommendedName>
    <alternativeName>
        <fullName evidence="8">Protein indeterminate-domain 1</fullName>
    </alternativeName>
</protein>
<name>IDD1_ARATH</name>
<reference key="1">
    <citation type="journal article" date="2000" name="DNA Res.">
        <title>Structural analysis of Arabidopsis thaliana chromosome 5. X. Sequence features of the regions of 3,076,755 bp covered by sixty P1 and TAC clones.</title>
        <authorList>
            <person name="Sato S."/>
            <person name="Nakamura Y."/>
            <person name="Kaneko T."/>
            <person name="Katoh T."/>
            <person name="Asamizu E."/>
            <person name="Kotani H."/>
            <person name="Tabata S."/>
        </authorList>
    </citation>
    <scope>NUCLEOTIDE SEQUENCE [LARGE SCALE GENOMIC DNA]</scope>
    <source>
        <strain>cv. Columbia</strain>
    </source>
</reference>
<reference key="2">
    <citation type="journal article" date="2017" name="Plant J.">
        <title>Araport11: a complete reannotation of the Arabidopsis thaliana reference genome.</title>
        <authorList>
            <person name="Cheng C.Y."/>
            <person name="Krishnakumar V."/>
            <person name="Chan A.P."/>
            <person name="Thibaud-Nissen F."/>
            <person name="Schobel S."/>
            <person name="Town C.D."/>
        </authorList>
    </citation>
    <scope>GENOME REANNOTATION</scope>
    <source>
        <strain>cv. Columbia</strain>
    </source>
</reference>
<reference key="3">
    <citation type="journal article" date="2003" name="Science">
        <title>Empirical analysis of transcriptional activity in the Arabidopsis genome.</title>
        <authorList>
            <person name="Yamada K."/>
            <person name="Lim J."/>
            <person name="Dale J.M."/>
            <person name="Chen H."/>
            <person name="Shinn P."/>
            <person name="Palm C.J."/>
            <person name="Southwick A.M."/>
            <person name="Wu H.C."/>
            <person name="Kim C.J."/>
            <person name="Nguyen M."/>
            <person name="Pham P.K."/>
            <person name="Cheuk R.F."/>
            <person name="Karlin-Newmann G."/>
            <person name="Liu S.X."/>
            <person name="Lam B."/>
            <person name="Sakano H."/>
            <person name="Wu T."/>
            <person name="Yu G."/>
            <person name="Miranda M."/>
            <person name="Quach H.L."/>
            <person name="Tripp M."/>
            <person name="Chang C.H."/>
            <person name="Lee J.M."/>
            <person name="Toriumi M.J."/>
            <person name="Chan M.M."/>
            <person name="Tang C.C."/>
            <person name="Onodera C.S."/>
            <person name="Deng J.M."/>
            <person name="Akiyama K."/>
            <person name="Ansari Y."/>
            <person name="Arakawa T."/>
            <person name="Banh J."/>
            <person name="Banno F."/>
            <person name="Bowser L."/>
            <person name="Brooks S.Y."/>
            <person name="Carninci P."/>
            <person name="Chao Q."/>
            <person name="Choy N."/>
            <person name="Enju A."/>
            <person name="Goldsmith A.D."/>
            <person name="Gurjal M."/>
            <person name="Hansen N.F."/>
            <person name="Hayashizaki Y."/>
            <person name="Johnson-Hopson C."/>
            <person name="Hsuan V.W."/>
            <person name="Iida K."/>
            <person name="Karnes M."/>
            <person name="Khan S."/>
            <person name="Koesema E."/>
            <person name="Ishida J."/>
            <person name="Jiang P.X."/>
            <person name="Jones T."/>
            <person name="Kawai J."/>
            <person name="Kamiya A."/>
            <person name="Meyers C."/>
            <person name="Nakajima M."/>
            <person name="Narusaka M."/>
            <person name="Seki M."/>
            <person name="Sakurai T."/>
            <person name="Satou M."/>
            <person name="Tamse R."/>
            <person name="Vaysberg M."/>
            <person name="Wallender E.K."/>
            <person name="Wong C."/>
            <person name="Yamamura Y."/>
            <person name="Yuan S."/>
            <person name="Shinozaki K."/>
            <person name="Davis R.W."/>
            <person name="Theologis A."/>
            <person name="Ecker J.R."/>
        </authorList>
    </citation>
    <scope>NUCLEOTIDE SEQUENCE [LARGE SCALE MRNA]</scope>
    <source>
        <strain>cv. Columbia</strain>
    </source>
</reference>
<reference key="4">
    <citation type="journal article" date="2006" name="BMC Genomics">
        <title>The maize INDETERMINATE1 flowering time regulator defines a highly conserved zinc finger protein family in higher plants.</title>
        <authorList>
            <person name="Colasanti J."/>
            <person name="Tremblay R."/>
            <person name="Wong A.Y."/>
            <person name="Coneva V."/>
            <person name="Kozaki A."/>
            <person name="Mable B.K."/>
        </authorList>
    </citation>
    <scope>GENE FAMILY</scope>
    <scope>NOMENCLATURE</scope>
</reference>
<reference key="5">
    <citation type="journal article" date="2011" name="Plant Cell">
        <title>The Arabidopsis C2H2 zinc finger INDETERMINATE DOMAIN1/ENHYDROUS promotes the transition to germination by regulating light and hormonal signaling during seed maturation.</title>
        <authorList>
            <person name="Feurtado J.A."/>
            <person name="Huang D."/>
            <person name="Wicki-Stordeur L."/>
            <person name="Hemstock L.E."/>
            <person name="Potentier M.S."/>
            <person name="Tsang E.W."/>
            <person name="Cutler A.J."/>
        </authorList>
    </citation>
    <scope>FUNCTION</scope>
    <scope>DEVELOPMENTAL STAGE</scope>
    <scope>TISSUE SPECIFICITY</scope>
    <scope>INTERACTION WITH DELLA PROTEINS</scope>
    <scope>SUBCELLULAR LOCATION</scope>
    <source>
        <strain>cv. Columbia</strain>
    </source>
</reference>
<reference key="6">
    <citation type="journal article" date="2014" name="Plant Cell">
        <title>DELLAs function as coactivators of GAI-ASSOCIATED FACTOR1 in regulation of gibberellin homeostasis and signaling in Arabidopsis.</title>
        <authorList>
            <person name="Fukazawa J."/>
            <person name="Teramura H."/>
            <person name="Murakoshi S."/>
            <person name="Nasuno K."/>
            <person name="Nishida N."/>
            <person name="Ito T."/>
            <person name="Yoshida M."/>
            <person name="Kamiya Y."/>
            <person name="Yamaguchi S."/>
            <person name="Takahashi Y."/>
        </authorList>
    </citation>
    <scope>FUNCTION</scope>
    <scope>DISRUPTION PHENOTYPE</scope>
    <scope>INTERACTION WITH DELLA PROTEINS</scope>
    <source>
        <strain>cv. Columbia</strain>
    </source>
</reference>
<evidence type="ECO:0000250" key="1">
    <source>
        <dbReference type="UniProtKB" id="Q700D2"/>
    </source>
</evidence>
<evidence type="ECO:0000250" key="2">
    <source>
        <dbReference type="UniProtKB" id="Q8GYC1"/>
    </source>
</evidence>
<evidence type="ECO:0000255" key="3">
    <source>
        <dbReference type="PROSITE-ProRule" id="PRU00042"/>
    </source>
</evidence>
<evidence type="ECO:0000255" key="4">
    <source>
        <dbReference type="PROSITE-ProRule" id="PRU00768"/>
    </source>
</evidence>
<evidence type="ECO:0000256" key="5">
    <source>
        <dbReference type="SAM" id="MobiDB-lite"/>
    </source>
</evidence>
<evidence type="ECO:0000269" key="6">
    <source>
    </source>
</evidence>
<evidence type="ECO:0000269" key="7">
    <source>
    </source>
</evidence>
<evidence type="ECO:0000303" key="8">
    <source>
    </source>
</evidence>
<evidence type="ECO:0000303" key="9">
    <source>
    </source>
</evidence>
<evidence type="ECO:0000305" key="10"/>
<evidence type="ECO:0000312" key="11">
    <source>
        <dbReference type="Araport" id="AT5G66730"/>
    </source>
</evidence>
<evidence type="ECO:0000312" key="12">
    <source>
        <dbReference type="EMBL" id="BAA97279.1"/>
    </source>
</evidence>
<proteinExistence type="evidence at protein level"/>
<feature type="chain" id="PRO_0000431538" description="Zinc finger protein ENHYDROUS">
    <location>
        <begin position="1"/>
        <end position="500"/>
    </location>
</feature>
<feature type="zinc finger region" description="C2H2-type 1" evidence="3">
    <location>
        <begin position="61"/>
        <end position="83"/>
    </location>
</feature>
<feature type="zinc finger region" description="C2H2-type 2" evidence="10">
    <location>
        <begin position="102"/>
        <end position="132"/>
    </location>
</feature>
<feature type="zinc finger region" description="C2H2-type 2; degenerate" evidence="3">
    <location>
        <begin position="137"/>
        <end position="160"/>
    </location>
</feature>
<feature type="zinc finger region" description="CCHC-type 2; atypical" evidence="10">
    <location>
        <begin position="164"/>
        <end position="187"/>
    </location>
</feature>
<feature type="region of interest" description="Disordered" evidence="5">
    <location>
        <begin position="1"/>
        <end position="42"/>
    </location>
</feature>
<feature type="region of interest" description="SHR-binding" evidence="1">
    <location>
        <begin position="174"/>
        <end position="186"/>
    </location>
</feature>
<feature type="region of interest" description="Disordered" evidence="5">
    <location>
        <begin position="196"/>
        <end position="236"/>
    </location>
</feature>
<feature type="short sequence motif" description="Nuclear localization signal" evidence="4">
    <location>
        <begin position="124"/>
        <end position="131"/>
    </location>
</feature>
<feature type="compositionally biased region" description="Low complexity" evidence="5">
    <location>
        <begin position="8"/>
        <end position="21"/>
    </location>
</feature>
<feature type="compositionally biased region" description="Basic and acidic residues" evidence="5">
    <location>
        <begin position="207"/>
        <end position="216"/>
    </location>
</feature>
<feature type="binding site" evidence="1">
    <location>
        <position position="139"/>
    </location>
    <ligand>
        <name>Zn(2+)</name>
        <dbReference type="ChEBI" id="CHEBI:29105"/>
        <label>1</label>
    </ligand>
</feature>
<feature type="binding site" evidence="1">
    <location>
        <position position="142"/>
    </location>
    <ligand>
        <name>Zn(2+)</name>
        <dbReference type="ChEBI" id="CHEBI:29105"/>
        <label>1</label>
    </ligand>
</feature>
<feature type="binding site" evidence="1">
    <location>
        <position position="155"/>
    </location>
    <ligand>
        <name>Zn(2+)</name>
        <dbReference type="ChEBI" id="CHEBI:29105"/>
        <label>1</label>
    </ligand>
</feature>
<feature type="binding site" evidence="1">
    <location>
        <position position="159"/>
    </location>
    <ligand>
        <name>Zn(2+)</name>
        <dbReference type="ChEBI" id="CHEBI:29105"/>
        <label>1</label>
    </ligand>
</feature>
<feature type="binding site" evidence="1">
    <location>
        <position position="166"/>
    </location>
    <ligand>
        <name>Zn(2+)</name>
        <dbReference type="ChEBI" id="CHEBI:29105"/>
        <label>2</label>
    </ligand>
</feature>
<feature type="binding site" evidence="1">
    <location>
        <position position="168"/>
    </location>
    <ligand>
        <name>Zn(2+)</name>
        <dbReference type="ChEBI" id="CHEBI:29105"/>
        <label>2</label>
    </ligand>
</feature>
<feature type="binding site" evidence="1">
    <location>
        <position position="181"/>
    </location>
    <ligand>
        <name>Zn(2+)</name>
        <dbReference type="ChEBI" id="CHEBI:29105"/>
        <label>2</label>
    </ligand>
</feature>
<feature type="binding site" evidence="1">
    <location>
        <position position="185"/>
    </location>
    <ligand>
        <name>Zn(2+)</name>
        <dbReference type="ChEBI" id="CHEBI:29105"/>
        <label>2</label>
    </ligand>
</feature>
<feature type="modified residue" description="Phosphoserine" evidence="2">
    <location>
        <position position="51"/>
    </location>
</feature>
<comment type="function">
    <text evidence="6 7">Transcription factor promoting the transition to germination by regulating light and hormonal signaling during seed maturation (PubMed:21571950). Acts as a positive regulator of phytochrome and/or gibberellin action (PubMed:21571950, PubMed:25035403).</text>
</comment>
<comment type="subunit">
    <text evidence="6 7">Interacts with the DELLA proteins (e.g. GAI/RGA2, RGA, RGL1, RGL2 and RGLG3), acting as coactivators.</text>
</comment>
<comment type="subcellular location">
    <subcellularLocation>
        <location evidence="4 6">Nucleus</location>
    </subcellularLocation>
</comment>
<comment type="tissue specificity">
    <text evidence="6">At 3 days post anthesis (DPA), expressed in the chalazal endosperm region. By 6 DPA, expressed in the endosperm and embryo. In fully germinated seed, strongest expression in the root tip and not detected in the cotyledons. In 4-days old seedlings, restricted to the vasculature of the cotyledons, the shoot apical meristem region, and the root tip. By 8 days, restricted to newly emerged leaves.</text>
</comment>
<comment type="developmental stage">
    <text evidence="6">Strongly up-regulated during seed development.</text>
</comment>
<comment type="disruption phenotype">
    <text evidence="7">Plants lacking both ENY/IDD1 and IDD2/GAF1 have a decreased responsiveness to gibberellic acid (GA).</text>
</comment>
<organism>
    <name type="scientific">Arabidopsis thaliana</name>
    <name type="common">Mouse-ear cress</name>
    <dbReference type="NCBI Taxonomy" id="3702"/>
    <lineage>
        <taxon>Eukaryota</taxon>
        <taxon>Viridiplantae</taxon>
        <taxon>Streptophyta</taxon>
        <taxon>Embryophyta</taxon>
        <taxon>Tracheophyta</taxon>
        <taxon>Spermatophyta</taxon>
        <taxon>Magnoliopsida</taxon>
        <taxon>eudicotyledons</taxon>
        <taxon>Gunneridae</taxon>
        <taxon>Pentapetalae</taxon>
        <taxon>rosids</taxon>
        <taxon>malvids</taxon>
        <taxon>Brassicales</taxon>
        <taxon>Brassicaceae</taxon>
        <taxon>Camelineae</taxon>
        <taxon>Arabidopsis</taxon>
    </lineage>
</organism>
<gene>
    <name evidence="9" type="primary">ENY</name>
    <name evidence="8" type="synonym">IDD1</name>
    <name evidence="11" type="ordered locus">At5g66730</name>
    <name evidence="12" type="ORF">MSN2.12</name>
</gene>
<accession>Q9LVQ7</accession>